<accession>A8ER63</accession>
<feature type="chain" id="PRO_1000126561" description="Large ribosomal subunit protein bL31">
    <location>
        <begin position="1"/>
        <end position="67"/>
    </location>
</feature>
<feature type="binding site" evidence="1">
    <location>
        <position position="16"/>
    </location>
    <ligand>
        <name>Zn(2+)</name>
        <dbReference type="ChEBI" id="CHEBI:29105"/>
    </ligand>
</feature>
<feature type="binding site" evidence="1">
    <location>
        <position position="18"/>
    </location>
    <ligand>
        <name>Zn(2+)</name>
        <dbReference type="ChEBI" id="CHEBI:29105"/>
    </ligand>
</feature>
<feature type="binding site" evidence="1">
    <location>
        <position position="36"/>
    </location>
    <ligand>
        <name>Zn(2+)</name>
        <dbReference type="ChEBI" id="CHEBI:29105"/>
    </ligand>
</feature>
<feature type="binding site" evidence="1">
    <location>
        <position position="39"/>
    </location>
    <ligand>
        <name>Zn(2+)</name>
        <dbReference type="ChEBI" id="CHEBI:29105"/>
    </ligand>
</feature>
<comment type="function">
    <text evidence="1">Binds the 23S rRNA.</text>
</comment>
<comment type="cofactor">
    <cofactor evidence="1">
        <name>Zn(2+)</name>
        <dbReference type="ChEBI" id="CHEBI:29105"/>
    </cofactor>
    <text evidence="1">Binds 1 zinc ion per subunit.</text>
</comment>
<comment type="subunit">
    <text evidence="1">Part of the 50S ribosomal subunit.</text>
</comment>
<comment type="similarity">
    <text evidence="1">Belongs to the bacterial ribosomal protein bL31 family. Type A subfamily.</text>
</comment>
<proteinExistence type="inferred from homology"/>
<name>RL31_ALIB4</name>
<reference key="1">
    <citation type="journal article" date="2007" name="PLoS ONE">
        <title>The complete genome sequence and analysis of the Epsilonproteobacterium Arcobacter butzleri.</title>
        <authorList>
            <person name="Miller W.G."/>
            <person name="Parker C.T."/>
            <person name="Rubenfield M."/>
            <person name="Mendz G.L."/>
            <person name="Woesten M.M.S.M."/>
            <person name="Ussery D.W."/>
            <person name="Stolz J.F."/>
            <person name="Binnewies T.T."/>
            <person name="Hallin P.F."/>
            <person name="Wang G."/>
            <person name="Malek J.A."/>
            <person name="Rogosin A."/>
            <person name="Stanker L.H."/>
            <person name="Mandrell R.E."/>
        </authorList>
    </citation>
    <scope>NUCLEOTIDE SEQUENCE [LARGE SCALE GENOMIC DNA]</scope>
    <source>
        <strain>RM4018</strain>
    </source>
</reference>
<protein>
    <recommendedName>
        <fullName evidence="1">Large ribosomal subunit protein bL31</fullName>
    </recommendedName>
    <alternativeName>
        <fullName evidence="2">50S ribosomal protein L31</fullName>
    </alternativeName>
</protein>
<organism>
    <name type="scientific">Aliarcobacter butzleri (strain RM4018)</name>
    <name type="common">Arcobacter butzleri</name>
    <dbReference type="NCBI Taxonomy" id="367737"/>
    <lineage>
        <taxon>Bacteria</taxon>
        <taxon>Pseudomonadati</taxon>
        <taxon>Campylobacterota</taxon>
        <taxon>Epsilonproteobacteria</taxon>
        <taxon>Campylobacterales</taxon>
        <taxon>Arcobacteraceae</taxon>
        <taxon>Aliarcobacter</taxon>
    </lineage>
</organism>
<gene>
    <name evidence="1" type="primary">rpmE</name>
    <name type="ordered locus">Abu_0153</name>
</gene>
<evidence type="ECO:0000255" key="1">
    <source>
        <dbReference type="HAMAP-Rule" id="MF_00501"/>
    </source>
</evidence>
<evidence type="ECO:0000305" key="2"/>
<sequence>MKKDIHPDYKVCTVTCACGNSFETKSNVETLKIDICSSCHPFFTGEQKLVDAAGRVEKFKAKYNMAK</sequence>
<keyword id="KW-0479">Metal-binding</keyword>
<keyword id="KW-1185">Reference proteome</keyword>
<keyword id="KW-0687">Ribonucleoprotein</keyword>
<keyword id="KW-0689">Ribosomal protein</keyword>
<keyword id="KW-0694">RNA-binding</keyword>
<keyword id="KW-0699">rRNA-binding</keyword>
<keyword id="KW-0862">Zinc</keyword>
<dbReference type="EMBL" id="CP000361">
    <property type="protein sequence ID" value="ABV66437.1"/>
    <property type="molecule type" value="Genomic_DNA"/>
</dbReference>
<dbReference type="RefSeq" id="WP_004510193.1">
    <property type="nucleotide sequence ID" value="NC_009850.1"/>
</dbReference>
<dbReference type="SMR" id="A8ER63"/>
<dbReference type="STRING" id="367737.Abu_0153"/>
<dbReference type="GeneID" id="24304836"/>
<dbReference type="KEGG" id="abu:Abu_0153"/>
<dbReference type="eggNOG" id="COG0254">
    <property type="taxonomic scope" value="Bacteria"/>
</dbReference>
<dbReference type="HOGENOM" id="CLU_114306_4_3_7"/>
<dbReference type="Proteomes" id="UP000001136">
    <property type="component" value="Chromosome"/>
</dbReference>
<dbReference type="GO" id="GO:1990904">
    <property type="term" value="C:ribonucleoprotein complex"/>
    <property type="evidence" value="ECO:0007669"/>
    <property type="project" value="UniProtKB-KW"/>
</dbReference>
<dbReference type="GO" id="GO:0005840">
    <property type="term" value="C:ribosome"/>
    <property type="evidence" value="ECO:0007669"/>
    <property type="project" value="UniProtKB-KW"/>
</dbReference>
<dbReference type="GO" id="GO:0046872">
    <property type="term" value="F:metal ion binding"/>
    <property type="evidence" value="ECO:0007669"/>
    <property type="project" value="UniProtKB-KW"/>
</dbReference>
<dbReference type="GO" id="GO:0019843">
    <property type="term" value="F:rRNA binding"/>
    <property type="evidence" value="ECO:0007669"/>
    <property type="project" value="UniProtKB-KW"/>
</dbReference>
<dbReference type="GO" id="GO:0003735">
    <property type="term" value="F:structural constituent of ribosome"/>
    <property type="evidence" value="ECO:0007669"/>
    <property type="project" value="InterPro"/>
</dbReference>
<dbReference type="GO" id="GO:0006412">
    <property type="term" value="P:translation"/>
    <property type="evidence" value="ECO:0007669"/>
    <property type="project" value="UniProtKB-UniRule"/>
</dbReference>
<dbReference type="Gene3D" id="4.10.830.30">
    <property type="entry name" value="Ribosomal protein L31"/>
    <property type="match status" value="1"/>
</dbReference>
<dbReference type="HAMAP" id="MF_00501">
    <property type="entry name" value="Ribosomal_bL31_1"/>
    <property type="match status" value="1"/>
</dbReference>
<dbReference type="InterPro" id="IPR034704">
    <property type="entry name" value="Ribosomal_bL28/bL31-like_sf"/>
</dbReference>
<dbReference type="InterPro" id="IPR002150">
    <property type="entry name" value="Ribosomal_bL31"/>
</dbReference>
<dbReference type="InterPro" id="IPR027491">
    <property type="entry name" value="Ribosomal_bL31_A"/>
</dbReference>
<dbReference type="InterPro" id="IPR042105">
    <property type="entry name" value="Ribosomal_bL31_sf"/>
</dbReference>
<dbReference type="NCBIfam" id="TIGR00105">
    <property type="entry name" value="L31"/>
    <property type="match status" value="1"/>
</dbReference>
<dbReference type="NCBIfam" id="NF000612">
    <property type="entry name" value="PRK00019.1"/>
    <property type="match status" value="1"/>
</dbReference>
<dbReference type="NCBIfam" id="NF001809">
    <property type="entry name" value="PRK00528.1"/>
    <property type="match status" value="1"/>
</dbReference>
<dbReference type="PANTHER" id="PTHR33280">
    <property type="entry name" value="50S RIBOSOMAL PROTEIN L31, CHLOROPLASTIC"/>
    <property type="match status" value="1"/>
</dbReference>
<dbReference type="PANTHER" id="PTHR33280:SF1">
    <property type="entry name" value="LARGE RIBOSOMAL SUBUNIT PROTEIN BL31C"/>
    <property type="match status" value="1"/>
</dbReference>
<dbReference type="Pfam" id="PF01197">
    <property type="entry name" value="Ribosomal_L31"/>
    <property type="match status" value="1"/>
</dbReference>
<dbReference type="PRINTS" id="PR01249">
    <property type="entry name" value="RIBOSOMALL31"/>
</dbReference>
<dbReference type="SUPFAM" id="SSF143800">
    <property type="entry name" value="L28p-like"/>
    <property type="match status" value="1"/>
</dbReference>
<dbReference type="PROSITE" id="PS01143">
    <property type="entry name" value="RIBOSOMAL_L31"/>
    <property type="match status" value="1"/>
</dbReference>